<dbReference type="EC" id="3.6.5.-"/>
<dbReference type="EMBL" id="CR382122">
    <property type="protein sequence ID" value="CAH02015.1"/>
    <property type="molecule type" value="Genomic_DNA"/>
</dbReference>
<dbReference type="RefSeq" id="XP_451622.1">
    <property type="nucleotide sequence ID" value="XM_451622.1"/>
</dbReference>
<dbReference type="SMR" id="Q6CWR7"/>
<dbReference type="FunCoup" id="Q6CWR7">
    <property type="interactions" value="978"/>
</dbReference>
<dbReference type="STRING" id="284590.Q6CWR7"/>
<dbReference type="PaxDb" id="284590-Q6CWR7"/>
<dbReference type="KEGG" id="kla:KLLA0_B02046g"/>
<dbReference type="eggNOG" id="KOG0077">
    <property type="taxonomic scope" value="Eukaryota"/>
</dbReference>
<dbReference type="HOGENOM" id="CLU_040729_6_0_1"/>
<dbReference type="InParanoid" id="Q6CWR7"/>
<dbReference type="OMA" id="GLWNKHG"/>
<dbReference type="Proteomes" id="UP000000598">
    <property type="component" value="Chromosome B"/>
</dbReference>
<dbReference type="GO" id="GO:0005789">
    <property type="term" value="C:endoplasmic reticulum membrane"/>
    <property type="evidence" value="ECO:0007669"/>
    <property type="project" value="UniProtKB-SubCell"/>
</dbReference>
<dbReference type="GO" id="GO:0012507">
    <property type="term" value="C:ER to Golgi transport vesicle membrane"/>
    <property type="evidence" value="ECO:0007669"/>
    <property type="project" value="UniProtKB-SubCell"/>
</dbReference>
<dbReference type="GO" id="GO:0000139">
    <property type="term" value="C:Golgi membrane"/>
    <property type="evidence" value="ECO:0007669"/>
    <property type="project" value="UniProtKB-SubCell"/>
</dbReference>
<dbReference type="GO" id="GO:0005525">
    <property type="term" value="F:GTP binding"/>
    <property type="evidence" value="ECO:0007669"/>
    <property type="project" value="UniProtKB-KW"/>
</dbReference>
<dbReference type="GO" id="GO:0003924">
    <property type="term" value="F:GTPase activity"/>
    <property type="evidence" value="ECO:0007669"/>
    <property type="project" value="InterPro"/>
</dbReference>
<dbReference type="GO" id="GO:0006886">
    <property type="term" value="P:intracellular protein transport"/>
    <property type="evidence" value="ECO:0007669"/>
    <property type="project" value="InterPro"/>
</dbReference>
<dbReference type="GO" id="GO:0016192">
    <property type="term" value="P:vesicle-mediated transport"/>
    <property type="evidence" value="ECO:0007669"/>
    <property type="project" value="UniProtKB-KW"/>
</dbReference>
<dbReference type="CDD" id="cd00879">
    <property type="entry name" value="Sar1"/>
    <property type="match status" value="1"/>
</dbReference>
<dbReference type="FunFam" id="3.40.50.300:FF:000161">
    <property type="entry name" value="Small COPII coat GTPase"/>
    <property type="match status" value="1"/>
</dbReference>
<dbReference type="Gene3D" id="3.40.50.300">
    <property type="entry name" value="P-loop containing nucleotide triphosphate hydrolases"/>
    <property type="match status" value="1"/>
</dbReference>
<dbReference type="InterPro" id="IPR027417">
    <property type="entry name" value="P-loop_NTPase"/>
</dbReference>
<dbReference type="InterPro" id="IPR005225">
    <property type="entry name" value="Small_GTP-bd"/>
</dbReference>
<dbReference type="InterPro" id="IPR006689">
    <property type="entry name" value="Small_GTPase_ARF/SAR"/>
</dbReference>
<dbReference type="InterPro" id="IPR006687">
    <property type="entry name" value="Small_GTPase_SAR1"/>
</dbReference>
<dbReference type="NCBIfam" id="TIGR00231">
    <property type="entry name" value="small_GTP"/>
    <property type="match status" value="1"/>
</dbReference>
<dbReference type="PANTHER" id="PTHR45684">
    <property type="entry name" value="RE74312P"/>
    <property type="match status" value="1"/>
</dbReference>
<dbReference type="Pfam" id="PF00025">
    <property type="entry name" value="Arf"/>
    <property type="match status" value="1"/>
</dbReference>
<dbReference type="PRINTS" id="PR00328">
    <property type="entry name" value="SAR1GTPBP"/>
</dbReference>
<dbReference type="SMART" id="SM00177">
    <property type="entry name" value="ARF"/>
    <property type="match status" value="1"/>
</dbReference>
<dbReference type="SMART" id="SM00178">
    <property type="entry name" value="SAR"/>
    <property type="match status" value="1"/>
</dbReference>
<dbReference type="SUPFAM" id="SSF52540">
    <property type="entry name" value="P-loop containing nucleoside triphosphate hydrolases"/>
    <property type="match status" value="1"/>
</dbReference>
<dbReference type="PROSITE" id="PS51422">
    <property type="entry name" value="SAR1"/>
    <property type="match status" value="1"/>
</dbReference>
<gene>
    <name type="primary">SAR1</name>
    <name type="ordered locus">KLLA0B02046g</name>
</gene>
<proteinExistence type="inferred from homology"/>
<name>SAR1_KLULA</name>
<accession>Q6CWR7</accession>
<feature type="chain" id="PRO_0000295516" description="Small COPII coat GTPase SAR1">
    <location>
        <begin position="1"/>
        <end position="190"/>
    </location>
</feature>
<feature type="binding site" evidence="1">
    <location>
        <begin position="30"/>
        <end position="37"/>
    </location>
    <ligand>
        <name>GTP</name>
        <dbReference type="ChEBI" id="CHEBI:37565"/>
    </ligand>
</feature>
<feature type="binding site" evidence="1">
    <location>
        <begin position="73"/>
        <end position="76"/>
    </location>
    <ligand>
        <name>GTP</name>
        <dbReference type="ChEBI" id="CHEBI:37565"/>
    </ligand>
</feature>
<feature type="binding site" evidence="1">
    <location>
        <begin position="132"/>
        <end position="135"/>
    </location>
    <ligand>
        <name>GTP</name>
        <dbReference type="ChEBI" id="CHEBI:37565"/>
    </ligand>
</feature>
<keyword id="KW-0968">Cytoplasmic vesicle</keyword>
<keyword id="KW-0256">Endoplasmic reticulum</keyword>
<keyword id="KW-0931">ER-Golgi transport</keyword>
<keyword id="KW-0333">Golgi apparatus</keyword>
<keyword id="KW-0342">GTP-binding</keyword>
<keyword id="KW-0378">Hydrolase</keyword>
<keyword id="KW-0472">Membrane</keyword>
<keyword id="KW-0547">Nucleotide-binding</keyword>
<keyword id="KW-0653">Protein transport</keyword>
<keyword id="KW-1185">Reference proteome</keyword>
<keyword id="KW-0813">Transport</keyword>
<reference key="1">
    <citation type="journal article" date="2004" name="Nature">
        <title>Genome evolution in yeasts.</title>
        <authorList>
            <person name="Dujon B."/>
            <person name="Sherman D."/>
            <person name="Fischer G."/>
            <person name="Durrens P."/>
            <person name="Casaregola S."/>
            <person name="Lafontaine I."/>
            <person name="de Montigny J."/>
            <person name="Marck C."/>
            <person name="Neuveglise C."/>
            <person name="Talla E."/>
            <person name="Goffard N."/>
            <person name="Frangeul L."/>
            <person name="Aigle M."/>
            <person name="Anthouard V."/>
            <person name="Babour A."/>
            <person name="Barbe V."/>
            <person name="Barnay S."/>
            <person name="Blanchin S."/>
            <person name="Beckerich J.-M."/>
            <person name="Beyne E."/>
            <person name="Bleykasten C."/>
            <person name="Boisrame A."/>
            <person name="Boyer J."/>
            <person name="Cattolico L."/>
            <person name="Confanioleri F."/>
            <person name="de Daruvar A."/>
            <person name="Despons L."/>
            <person name="Fabre E."/>
            <person name="Fairhead C."/>
            <person name="Ferry-Dumazet H."/>
            <person name="Groppi A."/>
            <person name="Hantraye F."/>
            <person name="Hennequin C."/>
            <person name="Jauniaux N."/>
            <person name="Joyet P."/>
            <person name="Kachouri R."/>
            <person name="Kerrest A."/>
            <person name="Koszul R."/>
            <person name="Lemaire M."/>
            <person name="Lesur I."/>
            <person name="Ma L."/>
            <person name="Muller H."/>
            <person name="Nicaud J.-M."/>
            <person name="Nikolski M."/>
            <person name="Oztas S."/>
            <person name="Ozier-Kalogeropoulos O."/>
            <person name="Pellenz S."/>
            <person name="Potier S."/>
            <person name="Richard G.-F."/>
            <person name="Straub M.-L."/>
            <person name="Suleau A."/>
            <person name="Swennen D."/>
            <person name="Tekaia F."/>
            <person name="Wesolowski-Louvel M."/>
            <person name="Westhof E."/>
            <person name="Wirth B."/>
            <person name="Zeniou-Meyer M."/>
            <person name="Zivanovic Y."/>
            <person name="Bolotin-Fukuhara M."/>
            <person name="Thierry A."/>
            <person name="Bouchier C."/>
            <person name="Caudron B."/>
            <person name="Scarpelli C."/>
            <person name="Gaillardin C."/>
            <person name="Weissenbach J."/>
            <person name="Wincker P."/>
            <person name="Souciet J.-L."/>
        </authorList>
    </citation>
    <scope>NUCLEOTIDE SEQUENCE [LARGE SCALE GENOMIC DNA]</scope>
    <source>
        <strain>ATCC 8585 / CBS 2359 / DSM 70799 / NBRC 1267 / NRRL Y-1140 / WM37</strain>
    </source>
</reference>
<organism>
    <name type="scientific">Kluyveromyces lactis (strain ATCC 8585 / CBS 2359 / DSM 70799 / NBRC 1267 / NRRL Y-1140 / WM37)</name>
    <name type="common">Yeast</name>
    <name type="synonym">Candida sphaerica</name>
    <dbReference type="NCBI Taxonomy" id="284590"/>
    <lineage>
        <taxon>Eukaryota</taxon>
        <taxon>Fungi</taxon>
        <taxon>Dikarya</taxon>
        <taxon>Ascomycota</taxon>
        <taxon>Saccharomycotina</taxon>
        <taxon>Saccharomycetes</taxon>
        <taxon>Saccharomycetales</taxon>
        <taxon>Saccharomycetaceae</taxon>
        <taxon>Kluyveromyces</taxon>
    </lineage>
</organism>
<evidence type="ECO:0000250" key="1"/>
<evidence type="ECO:0000305" key="2"/>
<sequence>MAGWDLFGWFRDILSSLGLWNKHGKLLFLGLDNAGKTTLLHMLKNDRLATLQPTWHPTSEELAIGNIKFTTFDLGGHLQARRLWKDYFPEVNGIVFLVDAADPERFNEARIELDALFQIKELDNVPFAVLGNKIDSPSAVSETELRAALGLMNTTGYTKIEGQRPIELFMCSVVMKSGYSEAFKWLSEYI</sequence>
<comment type="function">
    <text evidence="1">Small GTPase component of the coat protein complex II (COPII) which promotes the formation of transport vesicles from the endoplasmic reticulum (ER). The coat has two main functions, the physical deformation of the endoplasmic reticulum membrane into vesicles and the selection of cargo molecules. SAR1 controls the coat assembly in a stepwise manner. Activated SAR1-GTP binds to membranes first and recruits the SEC23/24 complex. These SEC23/24-SAR1 prebudding intermediates are then collected by the SEC13/31 complex as subunits polymerize to form coated transport vesicles. Conversion to SAR1-GDP triggers coat release and recycles COPII subunits (By similarity).</text>
</comment>
<comment type="catalytic activity">
    <reaction>
        <text>GTP + H2O = GDP + phosphate + H(+)</text>
        <dbReference type="Rhea" id="RHEA:19669"/>
        <dbReference type="ChEBI" id="CHEBI:15377"/>
        <dbReference type="ChEBI" id="CHEBI:15378"/>
        <dbReference type="ChEBI" id="CHEBI:37565"/>
        <dbReference type="ChEBI" id="CHEBI:43474"/>
        <dbReference type="ChEBI" id="CHEBI:58189"/>
    </reaction>
</comment>
<comment type="subunit">
    <text evidence="1">COPII is composed of at least 5 proteins: the SEC23/24 complex, the SEC13/31 complex and SAR1.</text>
</comment>
<comment type="subcellular location">
    <subcellularLocation>
        <location evidence="1">Cytoplasmic vesicle</location>
        <location evidence="1">COPII-coated vesicle membrane</location>
        <topology evidence="1">Peripheral membrane protein</topology>
        <orientation evidence="1">Cytoplasmic side</orientation>
    </subcellularLocation>
    <subcellularLocation>
        <location evidence="1">Endoplasmic reticulum membrane</location>
        <topology evidence="1">Peripheral membrane protein</topology>
        <orientation evidence="1">Cytoplasmic side</orientation>
    </subcellularLocation>
    <subcellularLocation>
        <location evidence="1">Golgi apparatus membrane</location>
        <topology evidence="1">Peripheral membrane protein</topology>
        <orientation evidence="1">Cytoplasmic side</orientation>
    </subcellularLocation>
</comment>
<comment type="similarity">
    <text evidence="2">Belongs to the small GTPase superfamily. SAR1 family.</text>
</comment>
<protein>
    <recommendedName>
        <fullName>Small COPII coat GTPase SAR1</fullName>
        <ecNumber>3.6.5.-</ecNumber>
    </recommendedName>
</protein>